<gene>
    <name evidence="1" type="primary">rpmA</name>
    <name type="ordered locus">PputW619_4496</name>
</gene>
<reference key="1">
    <citation type="submission" date="2008-02" db="EMBL/GenBank/DDBJ databases">
        <title>Complete sequence of Pseudomonas putida W619.</title>
        <authorList>
            <person name="Copeland A."/>
            <person name="Lucas S."/>
            <person name="Lapidus A."/>
            <person name="Barry K."/>
            <person name="Detter J.C."/>
            <person name="Glavina del Rio T."/>
            <person name="Dalin E."/>
            <person name="Tice H."/>
            <person name="Pitluck S."/>
            <person name="Chain P."/>
            <person name="Malfatti S."/>
            <person name="Shin M."/>
            <person name="Vergez L."/>
            <person name="Schmutz J."/>
            <person name="Larimer F."/>
            <person name="Land M."/>
            <person name="Hauser L."/>
            <person name="Kyrpides N."/>
            <person name="Kim E."/>
            <person name="Taghavi S."/>
            <person name="Vangronsveld D."/>
            <person name="van der Lelie D."/>
            <person name="Richardson P."/>
        </authorList>
    </citation>
    <scope>NUCLEOTIDE SEQUENCE [LARGE SCALE GENOMIC DNA]</scope>
    <source>
        <strain>W619</strain>
    </source>
</reference>
<name>RL27_PSEPW</name>
<accession>B1JF58</accession>
<protein>
    <recommendedName>
        <fullName evidence="1">Large ribosomal subunit protein bL27</fullName>
    </recommendedName>
    <alternativeName>
        <fullName evidence="3">50S ribosomal protein L27</fullName>
    </alternativeName>
</protein>
<evidence type="ECO:0000255" key="1">
    <source>
        <dbReference type="HAMAP-Rule" id="MF_00539"/>
    </source>
</evidence>
<evidence type="ECO:0000256" key="2">
    <source>
        <dbReference type="SAM" id="MobiDB-lite"/>
    </source>
</evidence>
<evidence type="ECO:0000305" key="3"/>
<organism>
    <name type="scientific">Pseudomonas putida (strain W619)</name>
    <dbReference type="NCBI Taxonomy" id="390235"/>
    <lineage>
        <taxon>Bacteria</taxon>
        <taxon>Pseudomonadati</taxon>
        <taxon>Pseudomonadota</taxon>
        <taxon>Gammaproteobacteria</taxon>
        <taxon>Pseudomonadales</taxon>
        <taxon>Pseudomonadaceae</taxon>
        <taxon>Pseudomonas</taxon>
    </lineage>
</organism>
<feature type="chain" id="PRO_1000128794" description="Large ribosomal subunit protein bL27">
    <location>
        <begin position="1"/>
        <end position="85"/>
    </location>
</feature>
<feature type="region of interest" description="Disordered" evidence="2">
    <location>
        <begin position="1"/>
        <end position="21"/>
    </location>
</feature>
<dbReference type="EMBL" id="CP000949">
    <property type="protein sequence ID" value="ACA74976.1"/>
    <property type="molecule type" value="Genomic_DNA"/>
</dbReference>
<dbReference type="SMR" id="B1JF58"/>
<dbReference type="STRING" id="390235.PputW619_4496"/>
<dbReference type="KEGG" id="ppw:PputW619_4496"/>
<dbReference type="eggNOG" id="COG0211">
    <property type="taxonomic scope" value="Bacteria"/>
</dbReference>
<dbReference type="HOGENOM" id="CLU_095424_4_1_6"/>
<dbReference type="OrthoDB" id="9803474at2"/>
<dbReference type="GO" id="GO:0022625">
    <property type="term" value="C:cytosolic large ribosomal subunit"/>
    <property type="evidence" value="ECO:0007669"/>
    <property type="project" value="TreeGrafter"/>
</dbReference>
<dbReference type="GO" id="GO:0003735">
    <property type="term" value="F:structural constituent of ribosome"/>
    <property type="evidence" value="ECO:0007669"/>
    <property type="project" value="InterPro"/>
</dbReference>
<dbReference type="GO" id="GO:0006412">
    <property type="term" value="P:translation"/>
    <property type="evidence" value="ECO:0007669"/>
    <property type="project" value="UniProtKB-UniRule"/>
</dbReference>
<dbReference type="FunFam" id="2.40.50.100:FF:000001">
    <property type="entry name" value="50S ribosomal protein L27"/>
    <property type="match status" value="1"/>
</dbReference>
<dbReference type="Gene3D" id="2.40.50.100">
    <property type="match status" value="1"/>
</dbReference>
<dbReference type="HAMAP" id="MF_00539">
    <property type="entry name" value="Ribosomal_bL27"/>
    <property type="match status" value="1"/>
</dbReference>
<dbReference type="InterPro" id="IPR001684">
    <property type="entry name" value="Ribosomal_bL27"/>
</dbReference>
<dbReference type="InterPro" id="IPR018261">
    <property type="entry name" value="Ribosomal_bL27_CS"/>
</dbReference>
<dbReference type="NCBIfam" id="TIGR00062">
    <property type="entry name" value="L27"/>
    <property type="match status" value="1"/>
</dbReference>
<dbReference type="PANTHER" id="PTHR15893:SF0">
    <property type="entry name" value="LARGE RIBOSOMAL SUBUNIT PROTEIN BL27M"/>
    <property type="match status" value="1"/>
</dbReference>
<dbReference type="PANTHER" id="PTHR15893">
    <property type="entry name" value="RIBOSOMAL PROTEIN L27"/>
    <property type="match status" value="1"/>
</dbReference>
<dbReference type="Pfam" id="PF01016">
    <property type="entry name" value="Ribosomal_L27"/>
    <property type="match status" value="1"/>
</dbReference>
<dbReference type="PRINTS" id="PR00063">
    <property type="entry name" value="RIBOSOMALL27"/>
</dbReference>
<dbReference type="SUPFAM" id="SSF110324">
    <property type="entry name" value="Ribosomal L27 protein-like"/>
    <property type="match status" value="1"/>
</dbReference>
<dbReference type="PROSITE" id="PS00831">
    <property type="entry name" value="RIBOSOMAL_L27"/>
    <property type="match status" value="1"/>
</dbReference>
<comment type="similarity">
    <text evidence="1">Belongs to the bacterial ribosomal protein bL27 family.</text>
</comment>
<proteinExistence type="inferred from homology"/>
<keyword id="KW-0687">Ribonucleoprotein</keyword>
<keyword id="KW-0689">Ribosomal protein</keyword>
<sequence>MAHKKAGGSTRNGRDSESKRLGVKMYGSQVVKAGNIIVRQRGTQFHAGYGVGMGKDHTLFAKIEGVIKFEKKGEFNRRYVSIVAA</sequence>